<organism>
    <name type="scientific">Solanum lycopersicum</name>
    <name type="common">Tomato</name>
    <name type="synonym">Lycopersicon esculentum</name>
    <dbReference type="NCBI Taxonomy" id="4081"/>
    <lineage>
        <taxon>Eukaryota</taxon>
        <taxon>Viridiplantae</taxon>
        <taxon>Streptophyta</taxon>
        <taxon>Embryophyta</taxon>
        <taxon>Tracheophyta</taxon>
        <taxon>Spermatophyta</taxon>
        <taxon>Magnoliopsida</taxon>
        <taxon>eudicotyledons</taxon>
        <taxon>Gunneridae</taxon>
        <taxon>Pentapetalae</taxon>
        <taxon>asterids</taxon>
        <taxon>lamiids</taxon>
        <taxon>Solanales</taxon>
        <taxon>Solanaceae</taxon>
        <taxon>Solanoideae</taxon>
        <taxon>Solaneae</taxon>
        <taxon>Solanum</taxon>
        <taxon>Solanum subgen. Lycopersicon</taxon>
    </lineage>
</organism>
<feature type="chain" id="PRO_0000058684" description="14-3-3 protein 4">
    <location>
        <begin position="1"/>
        <end position="260"/>
    </location>
</feature>
<feature type="region of interest" description="Disordered" evidence="1">
    <location>
        <begin position="238"/>
        <end position="260"/>
    </location>
</feature>
<feature type="compositionally biased region" description="Basic and acidic residues" evidence="1">
    <location>
        <begin position="245"/>
        <end position="260"/>
    </location>
</feature>
<feature type="sequence conflict" description="In Ref. 2; CAD43308." evidence="2" ref="2">
    <original>D</original>
    <variation>E</variation>
    <location>
        <position position="96"/>
    </location>
</feature>
<feature type="sequence conflict" description="In Ref. 2; CAD43308." evidence="2" ref="2">
    <original>H</original>
    <variation>Y</variation>
    <location>
        <position position="125"/>
    </location>
</feature>
<evidence type="ECO:0000256" key="1">
    <source>
        <dbReference type="SAM" id="MobiDB-lite"/>
    </source>
</evidence>
<evidence type="ECO:0000305" key="2"/>
<keyword id="KW-1185">Reference proteome</keyword>
<proteinExistence type="evidence at transcript level"/>
<dbReference type="EMBL" id="L29150">
    <property type="protein sequence ID" value="AAA99431.1"/>
    <property type="molecule type" value="mRNA"/>
</dbReference>
<dbReference type="EMBL" id="AJ504807">
    <property type="protein sequence ID" value="CAD43308.1"/>
    <property type="molecule type" value="mRNA"/>
</dbReference>
<dbReference type="PIR" id="S57272">
    <property type="entry name" value="S57272"/>
</dbReference>
<dbReference type="RefSeq" id="NP_001234007.1">
    <property type="nucleotide sequence ID" value="NM_001247078.1"/>
</dbReference>
<dbReference type="SMR" id="P42652"/>
<dbReference type="FunCoup" id="P42652">
    <property type="interactions" value="2636"/>
</dbReference>
<dbReference type="STRING" id="4081.P42652"/>
<dbReference type="PaxDb" id="4081-Solyc02g063070.2.1"/>
<dbReference type="GeneID" id="543791"/>
<dbReference type="KEGG" id="sly:543791"/>
<dbReference type="eggNOG" id="KOG0841">
    <property type="taxonomic scope" value="Eukaryota"/>
</dbReference>
<dbReference type="InParanoid" id="P42652"/>
<dbReference type="OrthoDB" id="10260625at2759"/>
<dbReference type="Proteomes" id="UP000004994">
    <property type="component" value="Unplaced"/>
</dbReference>
<dbReference type="ExpressionAtlas" id="P42652">
    <property type="expression patterns" value="baseline and differential"/>
</dbReference>
<dbReference type="GO" id="GO:0005737">
    <property type="term" value="C:cytoplasm"/>
    <property type="evidence" value="ECO:0000318"/>
    <property type="project" value="GO_Central"/>
</dbReference>
<dbReference type="GO" id="GO:0008104">
    <property type="term" value="P:protein localization"/>
    <property type="evidence" value="ECO:0000318"/>
    <property type="project" value="GO_Central"/>
</dbReference>
<dbReference type="GO" id="GO:0007165">
    <property type="term" value="P:signal transduction"/>
    <property type="evidence" value="ECO:0000318"/>
    <property type="project" value="GO_Central"/>
</dbReference>
<dbReference type="FunFam" id="1.20.190.20:FF:000002">
    <property type="entry name" value="14-3-3 protein epsilon"/>
    <property type="match status" value="1"/>
</dbReference>
<dbReference type="Gene3D" id="1.20.190.20">
    <property type="entry name" value="14-3-3 domain"/>
    <property type="match status" value="1"/>
</dbReference>
<dbReference type="InterPro" id="IPR000308">
    <property type="entry name" value="14-3-3"/>
</dbReference>
<dbReference type="InterPro" id="IPR023409">
    <property type="entry name" value="14-3-3_CS"/>
</dbReference>
<dbReference type="InterPro" id="IPR036815">
    <property type="entry name" value="14-3-3_dom_sf"/>
</dbReference>
<dbReference type="InterPro" id="IPR023410">
    <property type="entry name" value="14-3-3_domain"/>
</dbReference>
<dbReference type="PANTHER" id="PTHR18860">
    <property type="entry name" value="14-3-3 PROTEIN"/>
    <property type="match status" value="1"/>
</dbReference>
<dbReference type="Pfam" id="PF00244">
    <property type="entry name" value="14-3-3"/>
    <property type="match status" value="1"/>
</dbReference>
<dbReference type="PIRSF" id="PIRSF000868">
    <property type="entry name" value="14-3-3"/>
    <property type="match status" value="1"/>
</dbReference>
<dbReference type="PRINTS" id="PR00305">
    <property type="entry name" value="1433ZETA"/>
</dbReference>
<dbReference type="SMART" id="SM00101">
    <property type="entry name" value="14_3_3"/>
    <property type="match status" value="1"/>
</dbReference>
<dbReference type="SUPFAM" id="SSF48445">
    <property type="entry name" value="14-3-3 protein"/>
    <property type="match status" value="1"/>
</dbReference>
<dbReference type="PROSITE" id="PS00796">
    <property type="entry name" value="1433_1"/>
    <property type="match status" value="1"/>
</dbReference>
<dbReference type="PROSITE" id="PS00797">
    <property type="entry name" value="1433_2"/>
    <property type="match status" value="1"/>
</dbReference>
<accession>P42652</accession>
<accession>Q8L5E2</accession>
<comment type="subunit">
    <text evidence="2">Homodimer.</text>
</comment>
<comment type="similarity">
    <text evidence="2">Belongs to the 14-3-3 family.</text>
</comment>
<protein>
    <recommendedName>
        <fullName>14-3-3 protein 4</fullName>
    </recommendedName>
    <alternativeName>
        <fullName>PBLT4</fullName>
    </alternativeName>
</protein>
<sequence length="260" mass="29299">MADSSREENVYLAKLAEQAERYEEMIEFMEKVAKTADVEELTVEERNLLSVAYKNVIGARRASWRIISSIEQKEESRGNEDHVNTIKEYRSKIEADLSKICDGILSLLESNLIPSASTAESKVFHLKMKGDYHRYLAEFKTGTERKEAAENTLLAYKSAQDIALAELAPTHPIRLGLALNFSVFYYEILNSPDRACNLAKQAFDEAISELDTLGEESYKDSTLIMQLLRDNLTLWTSDNADDVGDDIKEASKPESGEGQQ</sequence>
<gene>
    <name type="primary">TFT4</name>
</gene>
<reference key="1">
    <citation type="journal article" date="1995" name="Biochim. Biophys. Acta">
        <title>Two cDNA clones encoding 14-3-3 homologs from tomato fruit.</title>
        <authorList>
            <person name="Laughner B."/>
            <person name="Lawrence S.D."/>
            <person name="Ferl R.J."/>
        </authorList>
    </citation>
    <scope>NUCLEOTIDE SEQUENCE [MRNA]</scope>
    <source>
        <strain>cv. Ailsa Craig</strain>
        <tissue>Fruit</tissue>
    </source>
</reference>
<reference key="2">
    <citation type="journal article" date="1999" name="Plant Physiol.">
        <title>Fusicoccin, 14-3-3 proteins, and defense responses in tomato plants.</title>
        <authorList>
            <person name="Roberts M.R."/>
            <person name="Bowles D.J."/>
        </authorList>
    </citation>
    <scope>NUCLEOTIDE SEQUENCE [MRNA]</scope>
    <source>
        <strain>cv. Moneymaker</strain>
        <tissue>Leaf</tissue>
    </source>
</reference>
<name>14334_SOLLC</name>